<proteinExistence type="inferred from homology"/>
<evidence type="ECO:0000255" key="1">
    <source>
        <dbReference type="HAMAP-Rule" id="MF_01850"/>
    </source>
</evidence>
<evidence type="ECO:0000256" key="2">
    <source>
        <dbReference type="SAM" id="MobiDB-lite"/>
    </source>
</evidence>
<organism>
    <name type="scientific">Yersinia pestis (strain Pestoides F)</name>
    <dbReference type="NCBI Taxonomy" id="386656"/>
    <lineage>
        <taxon>Bacteria</taxon>
        <taxon>Pseudomonadati</taxon>
        <taxon>Pseudomonadota</taxon>
        <taxon>Gammaproteobacteria</taxon>
        <taxon>Enterobacterales</taxon>
        <taxon>Yersiniaceae</taxon>
        <taxon>Yersinia</taxon>
    </lineage>
</organism>
<name>TTCA_YERPP</name>
<gene>
    <name evidence="1" type="primary">ttcA</name>
    <name type="ordered locus">YPDSF_0811</name>
</gene>
<dbReference type="EC" id="2.8.1.-" evidence="1"/>
<dbReference type="EMBL" id="CP000668">
    <property type="protein sequence ID" value="ABP39217.1"/>
    <property type="molecule type" value="Genomic_DNA"/>
</dbReference>
<dbReference type="RefSeq" id="WP_002210992.1">
    <property type="nucleotide sequence ID" value="NZ_CP009715.1"/>
</dbReference>
<dbReference type="SMR" id="A4TIV5"/>
<dbReference type="GeneID" id="57976339"/>
<dbReference type="KEGG" id="ypp:YPDSF_0811"/>
<dbReference type="PATRIC" id="fig|386656.14.peg.3049"/>
<dbReference type="GO" id="GO:0005737">
    <property type="term" value="C:cytoplasm"/>
    <property type="evidence" value="ECO:0007669"/>
    <property type="project" value="UniProtKB-SubCell"/>
</dbReference>
<dbReference type="GO" id="GO:0051539">
    <property type="term" value="F:4 iron, 4 sulfur cluster binding"/>
    <property type="evidence" value="ECO:0007669"/>
    <property type="project" value="UniProtKB-UniRule"/>
</dbReference>
<dbReference type="GO" id="GO:0005524">
    <property type="term" value="F:ATP binding"/>
    <property type="evidence" value="ECO:0007669"/>
    <property type="project" value="UniProtKB-UniRule"/>
</dbReference>
<dbReference type="GO" id="GO:0000287">
    <property type="term" value="F:magnesium ion binding"/>
    <property type="evidence" value="ECO:0007669"/>
    <property type="project" value="UniProtKB-UniRule"/>
</dbReference>
<dbReference type="GO" id="GO:0016783">
    <property type="term" value="F:sulfurtransferase activity"/>
    <property type="evidence" value="ECO:0007669"/>
    <property type="project" value="UniProtKB-UniRule"/>
</dbReference>
<dbReference type="GO" id="GO:0000049">
    <property type="term" value="F:tRNA binding"/>
    <property type="evidence" value="ECO:0007669"/>
    <property type="project" value="UniProtKB-KW"/>
</dbReference>
<dbReference type="GO" id="GO:0034227">
    <property type="term" value="P:tRNA thio-modification"/>
    <property type="evidence" value="ECO:0007669"/>
    <property type="project" value="UniProtKB-UniRule"/>
</dbReference>
<dbReference type="CDD" id="cd24138">
    <property type="entry name" value="TtcA-like"/>
    <property type="match status" value="1"/>
</dbReference>
<dbReference type="Gene3D" id="3.40.50.620">
    <property type="entry name" value="HUPs"/>
    <property type="match status" value="1"/>
</dbReference>
<dbReference type="HAMAP" id="MF_01850">
    <property type="entry name" value="TtcA"/>
    <property type="match status" value="1"/>
</dbReference>
<dbReference type="InterPro" id="IPR014729">
    <property type="entry name" value="Rossmann-like_a/b/a_fold"/>
</dbReference>
<dbReference type="InterPro" id="IPR011063">
    <property type="entry name" value="TilS/TtcA_N"/>
</dbReference>
<dbReference type="InterPro" id="IPR012089">
    <property type="entry name" value="tRNA_Cyd_32_2_STrfase"/>
</dbReference>
<dbReference type="InterPro" id="IPR035107">
    <property type="entry name" value="tRNA_thiolation_TtcA_Ctu1"/>
</dbReference>
<dbReference type="NCBIfam" id="NF007972">
    <property type="entry name" value="PRK10696.1"/>
    <property type="match status" value="1"/>
</dbReference>
<dbReference type="PANTHER" id="PTHR43686:SF1">
    <property type="entry name" value="AMINOTRAN_5 DOMAIN-CONTAINING PROTEIN"/>
    <property type="match status" value="1"/>
</dbReference>
<dbReference type="PANTHER" id="PTHR43686">
    <property type="entry name" value="SULFURTRANSFERASE-RELATED"/>
    <property type="match status" value="1"/>
</dbReference>
<dbReference type="Pfam" id="PF01171">
    <property type="entry name" value="ATP_bind_3"/>
    <property type="match status" value="1"/>
</dbReference>
<dbReference type="PIRSF" id="PIRSF004976">
    <property type="entry name" value="ATPase_YdaO"/>
    <property type="match status" value="1"/>
</dbReference>
<dbReference type="SUPFAM" id="SSF52402">
    <property type="entry name" value="Adenine nucleotide alpha hydrolases-like"/>
    <property type="match status" value="1"/>
</dbReference>
<comment type="function">
    <text evidence="1">Catalyzes the ATP-dependent 2-thiolation of cytidine in position 32 of tRNA, to form 2-thiocytidine (s(2)C32). The sulfur atoms are provided by the cysteine/cysteine desulfurase (IscS) system.</text>
</comment>
<comment type="catalytic activity">
    <reaction evidence="1">
        <text>cytidine(32) in tRNA + S-sulfanyl-L-cysteinyl-[cysteine desulfurase] + AH2 + ATP = 2-thiocytidine(32) in tRNA + L-cysteinyl-[cysteine desulfurase] + A + AMP + diphosphate + H(+)</text>
        <dbReference type="Rhea" id="RHEA:57048"/>
        <dbReference type="Rhea" id="RHEA-COMP:10288"/>
        <dbReference type="Rhea" id="RHEA-COMP:12157"/>
        <dbReference type="Rhea" id="RHEA-COMP:12158"/>
        <dbReference type="Rhea" id="RHEA-COMP:14821"/>
        <dbReference type="ChEBI" id="CHEBI:13193"/>
        <dbReference type="ChEBI" id="CHEBI:15378"/>
        <dbReference type="ChEBI" id="CHEBI:17499"/>
        <dbReference type="ChEBI" id="CHEBI:29950"/>
        <dbReference type="ChEBI" id="CHEBI:30616"/>
        <dbReference type="ChEBI" id="CHEBI:33019"/>
        <dbReference type="ChEBI" id="CHEBI:61963"/>
        <dbReference type="ChEBI" id="CHEBI:82748"/>
        <dbReference type="ChEBI" id="CHEBI:141453"/>
        <dbReference type="ChEBI" id="CHEBI:456215"/>
    </reaction>
    <physiologicalReaction direction="left-to-right" evidence="1">
        <dbReference type="Rhea" id="RHEA:57049"/>
    </physiologicalReaction>
</comment>
<comment type="cofactor">
    <cofactor evidence="1">
        <name>Mg(2+)</name>
        <dbReference type="ChEBI" id="CHEBI:18420"/>
    </cofactor>
</comment>
<comment type="cofactor">
    <cofactor evidence="1">
        <name>[4Fe-4S] cluster</name>
        <dbReference type="ChEBI" id="CHEBI:49883"/>
    </cofactor>
    <text evidence="1">Binds 1 [4Fe-4S] cluster per subunit. The cluster is chelated by three Cys residues, the fourth Fe has a free coordination site that may bind a sulfur atom transferred from the persulfide of IscS.</text>
</comment>
<comment type="pathway">
    <text evidence="1">tRNA modification.</text>
</comment>
<comment type="subunit">
    <text evidence="1">Homodimer.</text>
</comment>
<comment type="subcellular location">
    <subcellularLocation>
        <location evidence="1">Cytoplasm</location>
    </subcellularLocation>
</comment>
<comment type="miscellaneous">
    <text evidence="1">The thiolation reaction likely consists of two steps: a first activation step by ATP to form an adenylated intermediate of the target base of tRNA, and a second nucleophilic substitution step of the sulfur (S) atom supplied by the hydrosulfide attached to the Fe-S cluster.</text>
</comment>
<comment type="similarity">
    <text evidence="1">Belongs to the TtcA family.</text>
</comment>
<feature type="chain" id="PRO_0000348882" description="tRNA-cytidine(32) 2-sulfurtransferase">
    <location>
        <begin position="1"/>
        <end position="313"/>
    </location>
</feature>
<feature type="region of interest" description="Disordered" evidence="2">
    <location>
        <begin position="288"/>
        <end position="313"/>
    </location>
</feature>
<feature type="short sequence motif" description="PP-loop motif" evidence="1">
    <location>
        <begin position="47"/>
        <end position="52"/>
    </location>
</feature>
<feature type="compositionally biased region" description="Basic and acidic residues" evidence="2">
    <location>
        <begin position="299"/>
        <end position="313"/>
    </location>
</feature>
<feature type="binding site" evidence="1">
    <location>
        <position position="122"/>
    </location>
    <ligand>
        <name>[4Fe-4S] cluster</name>
        <dbReference type="ChEBI" id="CHEBI:49883"/>
    </ligand>
</feature>
<feature type="binding site" evidence="1">
    <location>
        <position position="125"/>
    </location>
    <ligand>
        <name>[4Fe-4S] cluster</name>
        <dbReference type="ChEBI" id="CHEBI:49883"/>
    </ligand>
</feature>
<feature type="binding site" evidence="1">
    <location>
        <position position="213"/>
    </location>
    <ligand>
        <name>[4Fe-4S] cluster</name>
        <dbReference type="ChEBI" id="CHEBI:49883"/>
    </ligand>
</feature>
<keyword id="KW-0004">4Fe-4S</keyword>
<keyword id="KW-0067">ATP-binding</keyword>
<keyword id="KW-0963">Cytoplasm</keyword>
<keyword id="KW-0408">Iron</keyword>
<keyword id="KW-0411">Iron-sulfur</keyword>
<keyword id="KW-0460">Magnesium</keyword>
<keyword id="KW-0479">Metal-binding</keyword>
<keyword id="KW-0547">Nucleotide-binding</keyword>
<keyword id="KW-0694">RNA-binding</keyword>
<keyword id="KW-0808">Transferase</keyword>
<keyword id="KW-0819">tRNA processing</keyword>
<keyword id="KW-0820">tRNA-binding</keyword>
<protein>
    <recommendedName>
        <fullName evidence="1">tRNA-cytidine(32) 2-sulfurtransferase</fullName>
        <ecNumber evidence="1">2.8.1.-</ecNumber>
    </recommendedName>
    <alternativeName>
        <fullName evidence="1">Two-thiocytidine biosynthesis protein A</fullName>
    </alternativeName>
    <alternativeName>
        <fullName evidence="1">tRNA 2-thiocytidine biosynthesis protein TtcA</fullName>
    </alternativeName>
</protein>
<reference key="1">
    <citation type="submission" date="2007-02" db="EMBL/GenBank/DDBJ databases">
        <title>Complete sequence of chromosome of Yersinia pestis Pestoides F.</title>
        <authorList>
            <consortium name="US DOE Joint Genome Institute"/>
            <person name="Copeland A."/>
            <person name="Lucas S."/>
            <person name="Lapidus A."/>
            <person name="Barry K."/>
            <person name="Detter J.C."/>
            <person name="Glavina del Rio T."/>
            <person name="Hammon N."/>
            <person name="Israni S."/>
            <person name="Dalin E."/>
            <person name="Tice H."/>
            <person name="Pitluck S."/>
            <person name="Di Bartolo G."/>
            <person name="Chain P."/>
            <person name="Malfatti S."/>
            <person name="Shin M."/>
            <person name="Vergez L."/>
            <person name="Schmutz J."/>
            <person name="Larimer F."/>
            <person name="Land M."/>
            <person name="Hauser L."/>
            <person name="Worsham P."/>
            <person name="Chu M."/>
            <person name="Bearden S."/>
            <person name="Garcia E."/>
            <person name="Richardson P."/>
        </authorList>
    </citation>
    <scope>NUCLEOTIDE SEQUENCE [LARGE SCALE GENOMIC DNA]</scope>
    <source>
        <strain>Pestoides F</strain>
    </source>
</reference>
<sequence length="313" mass="35799">MLEKQSVNQKEQYNFNKLQKRLRRNVGQAIADFNMIEEGDRVMVCLSGGKDSYTMLDILQSLQKSAPINFSLIAVNLDQKQPGFPEDILPAYLDKQGVEYKIVEENTYGIVKEIIPEGKTTCSLCSRLRRGILYRTATELGATKIALGHHRDDILQTLFLNMFYGGKLKGMPPKLMSDDGKHIVIRPLAYCREKDIERFAVAREYPIIPCNLCGSQPNLQRQVIKDMLRDWDKQYPGRIETMFSAMQNVVPSHLNDHKLFDFKSITHDSDIIDGGDLAFDREALPLNPVGWQPEDDEDTEKRPPVRLDVLEIK</sequence>
<accession>A4TIV5</accession>